<organism>
    <name type="scientific">Synechocystis sp. (strain ATCC 27184 / PCC 6803 / Kazusa)</name>
    <dbReference type="NCBI Taxonomy" id="1111708"/>
    <lineage>
        <taxon>Bacteria</taxon>
        <taxon>Bacillati</taxon>
        <taxon>Cyanobacteriota</taxon>
        <taxon>Cyanophyceae</taxon>
        <taxon>Synechococcales</taxon>
        <taxon>Merismopediaceae</taxon>
        <taxon>Synechocystis</taxon>
    </lineage>
</organism>
<accession>P73326</accession>
<dbReference type="EC" id="2.7.2.8" evidence="1"/>
<dbReference type="EMBL" id="BA000022">
    <property type="protein sequence ID" value="BAA17356.1"/>
    <property type="molecule type" value="Genomic_DNA"/>
</dbReference>
<dbReference type="PIR" id="S77509">
    <property type="entry name" value="S77509"/>
</dbReference>
<dbReference type="SMR" id="P73326"/>
<dbReference type="FunCoup" id="P73326">
    <property type="interactions" value="459"/>
</dbReference>
<dbReference type="STRING" id="1148.gene:10498219"/>
<dbReference type="PaxDb" id="1148-1652434"/>
<dbReference type="EnsemblBacteria" id="BAA17356">
    <property type="protein sequence ID" value="BAA17356"/>
    <property type="gene ID" value="BAA17356"/>
</dbReference>
<dbReference type="KEGG" id="syn:slr1898"/>
<dbReference type="eggNOG" id="COG0548">
    <property type="taxonomic scope" value="Bacteria"/>
</dbReference>
<dbReference type="InParanoid" id="P73326"/>
<dbReference type="PhylomeDB" id="P73326"/>
<dbReference type="UniPathway" id="UPA00068">
    <property type="reaction ID" value="UER00107"/>
</dbReference>
<dbReference type="Proteomes" id="UP000001425">
    <property type="component" value="Chromosome"/>
</dbReference>
<dbReference type="GO" id="GO:0005737">
    <property type="term" value="C:cytoplasm"/>
    <property type="evidence" value="ECO:0007669"/>
    <property type="project" value="UniProtKB-SubCell"/>
</dbReference>
<dbReference type="GO" id="GO:0003991">
    <property type="term" value="F:acetylglutamate kinase activity"/>
    <property type="evidence" value="ECO:0000318"/>
    <property type="project" value="GO_Central"/>
</dbReference>
<dbReference type="GO" id="GO:0005524">
    <property type="term" value="F:ATP binding"/>
    <property type="evidence" value="ECO:0007669"/>
    <property type="project" value="UniProtKB-UniRule"/>
</dbReference>
<dbReference type="GO" id="GO:0042450">
    <property type="term" value="P:arginine biosynthetic process via ornithine"/>
    <property type="evidence" value="ECO:0007669"/>
    <property type="project" value="UniProtKB-UniRule"/>
</dbReference>
<dbReference type="GO" id="GO:0006526">
    <property type="term" value="P:L-arginine biosynthetic process"/>
    <property type="evidence" value="ECO:0000318"/>
    <property type="project" value="GO_Central"/>
</dbReference>
<dbReference type="CDD" id="cd04250">
    <property type="entry name" value="AAK_NAGK-C"/>
    <property type="match status" value="1"/>
</dbReference>
<dbReference type="FunFam" id="3.40.1160.10:FF:000004">
    <property type="entry name" value="Acetylglutamate kinase"/>
    <property type="match status" value="1"/>
</dbReference>
<dbReference type="Gene3D" id="3.40.1160.10">
    <property type="entry name" value="Acetylglutamate kinase-like"/>
    <property type="match status" value="1"/>
</dbReference>
<dbReference type="HAMAP" id="MF_00082">
    <property type="entry name" value="ArgB"/>
    <property type="match status" value="1"/>
</dbReference>
<dbReference type="InterPro" id="IPR036393">
    <property type="entry name" value="AceGlu_kinase-like_sf"/>
</dbReference>
<dbReference type="InterPro" id="IPR004662">
    <property type="entry name" value="AcgluKinase_fam"/>
</dbReference>
<dbReference type="InterPro" id="IPR037528">
    <property type="entry name" value="ArgB"/>
</dbReference>
<dbReference type="InterPro" id="IPR001048">
    <property type="entry name" value="Asp/Glu/Uridylate_kinase"/>
</dbReference>
<dbReference type="InterPro" id="IPR001057">
    <property type="entry name" value="Glu/AcGlu_kinase"/>
</dbReference>
<dbReference type="InterPro" id="IPR041727">
    <property type="entry name" value="NAGK-C"/>
</dbReference>
<dbReference type="NCBIfam" id="TIGR00761">
    <property type="entry name" value="argB"/>
    <property type="match status" value="1"/>
</dbReference>
<dbReference type="PANTHER" id="PTHR23342">
    <property type="entry name" value="N-ACETYLGLUTAMATE SYNTHASE"/>
    <property type="match status" value="1"/>
</dbReference>
<dbReference type="PANTHER" id="PTHR23342:SF0">
    <property type="entry name" value="N-ACETYLGLUTAMATE SYNTHASE, MITOCHONDRIAL"/>
    <property type="match status" value="1"/>
</dbReference>
<dbReference type="Pfam" id="PF00696">
    <property type="entry name" value="AA_kinase"/>
    <property type="match status" value="1"/>
</dbReference>
<dbReference type="PIRSF" id="PIRSF000728">
    <property type="entry name" value="NAGK"/>
    <property type="match status" value="1"/>
</dbReference>
<dbReference type="PRINTS" id="PR00474">
    <property type="entry name" value="GLU5KINASE"/>
</dbReference>
<dbReference type="SUPFAM" id="SSF53633">
    <property type="entry name" value="Carbamate kinase-like"/>
    <property type="match status" value="1"/>
</dbReference>
<comment type="function">
    <text evidence="1">Catalyzes the ATP-dependent phosphorylation of N-acetyl-L-glutamate.</text>
</comment>
<comment type="catalytic activity">
    <reaction evidence="1">
        <text>N-acetyl-L-glutamate + ATP = N-acetyl-L-glutamyl 5-phosphate + ADP</text>
        <dbReference type="Rhea" id="RHEA:14629"/>
        <dbReference type="ChEBI" id="CHEBI:30616"/>
        <dbReference type="ChEBI" id="CHEBI:44337"/>
        <dbReference type="ChEBI" id="CHEBI:57936"/>
        <dbReference type="ChEBI" id="CHEBI:456216"/>
        <dbReference type="EC" id="2.7.2.8"/>
    </reaction>
</comment>
<comment type="pathway">
    <text evidence="1">Amino-acid biosynthesis; L-arginine biosynthesis; N(2)-acetyl-L-ornithine from L-glutamate: step 2/4.</text>
</comment>
<comment type="subcellular location">
    <subcellularLocation>
        <location evidence="1">Cytoplasm</location>
    </subcellularLocation>
</comment>
<comment type="similarity">
    <text evidence="1">Belongs to the acetylglutamate kinase family. ArgB subfamily.</text>
</comment>
<gene>
    <name evidence="1" type="primary">argB</name>
    <name type="ordered locus">slr1898</name>
</gene>
<proteinExistence type="inferred from homology"/>
<name>ARGB_SYNY3</name>
<protein>
    <recommendedName>
        <fullName evidence="1">Acetylglutamate kinase</fullName>
        <ecNumber evidence="1">2.7.2.8</ecNumber>
    </recommendedName>
    <alternativeName>
        <fullName evidence="1">N-acetyl-L-glutamate 5-phosphotransferase</fullName>
    </alternativeName>
    <alternativeName>
        <fullName evidence="1">NAG kinase</fullName>
        <shortName evidence="1">NAGK</shortName>
    </alternativeName>
</protein>
<sequence length="297" mass="31526">MSSTQDYIGEEAATRVKILSEALPYIQHFAGRTVVVKYGGAAMKDSNLKDKVIRDIVFMASVGIRPVVVHGGGPEINTWLDKVGIEPQFKDGLRVTDAATMDIVEMVLVGRVNKELVNLINQAGGKAVGLCGKDGQLMTARTMTNKDVGFVGEVSSVDARVVETLVKSGYIPVISSVAADEFGQAHNINADTCAGELAAALGAEKLILLTDTRGILRDYKDPSTLIHKLDIQQARELIGSGIVAGGMIPKVTCCVRSLAQGVRAAHILDGRLPHALLLEVFTDLGIGSMIVASGYDL</sequence>
<evidence type="ECO:0000255" key="1">
    <source>
        <dbReference type="HAMAP-Rule" id="MF_00082"/>
    </source>
</evidence>
<keyword id="KW-0028">Amino-acid biosynthesis</keyword>
<keyword id="KW-0055">Arginine biosynthesis</keyword>
<keyword id="KW-0067">ATP-binding</keyword>
<keyword id="KW-0963">Cytoplasm</keyword>
<keyword id="KW-0418">Kinase</keyword>
<keyword id="KW-0547">Nucleotide-binding</keyword>
<keyword id="KW-1185">Reference proteome</keyword>
<keyword id="KW-0808">Transferase</keyword>
<feature type="chain" id="PRO_0000112677" description="Acetylglutamate kinase">
    <location>
        <begin position="1"/>
        <end position="297"/>
    </location>
</feature>
<feature type="binding site" evidence="1">
    <location>
        <begin position="72"/>
        <end position="73"/>
    </location>
    <ligand>
        <name>substrate</name>
    </ligand>
</feature>
<feature type="binding site" evidence="1">
    <location>
        <position position="94"/>
    </location>
    <ligand>
        <name>substrate</name>
    </ligand>
</feature>
<feature type="binding site" evidence="1">
    <location>
        <position position="187"/>
    </location>
    <ligand>
        <name>substrate</name>
    </ligand>
</feature>
<feature type="site" description="Transition state stabilizer" evidence="1">
    <location>
        <position position="37"/>
    </location>
</feature>
<feature type="site" description="Transition state stabilizer" evidence="1">
    <location>
        <position position="250"/>
    </location>
</feature>
<reference key="1">
    <citation type="journal article" date="1996" name="DNA Res.">
        <title>Sequence analysis of the genome of the unicellular cyanobacterium Synechocystis sp. strain PCC6803. II. Sequence determination of the entire genome and assignment of potential protein-coding regions.</title>
        <authorList>
            <person name="Kaneko T."/>
            <person name="Sato S."/>
            <person name="Kotani H."/>
            <person name="Tanaka A."/>
            <person name="Asamizu E."/>
            <person name="Nakamura Y."/>
            <person name="Miyajima N."/>
            <person name="Hirosawa M."/>
            <person name="Sugiura M."/>
            <person name="Sasamoto S."/>
            <person name="Kimura T."/>
            <person name="Hosouchi T."/>
            <person name="Matsuno A."/>
            <person name="Muraki A."/>
            <person name="Nakazaki N."/>
            <person name="Naruo K."/>
            <person name="Okumura S."/>
            <person name="Shimpo S."/>
            <person name="Takeuchi C."/>
            <person name="Wada T."/>
            <person name="Watanabe A."/>
            <person name="Yamada M."/>
            <person name="Yasuda M."/>
            <person name="Tabata S."/>
        </authorList>
    </citation>
    <scope>NUCLEOTIDE SEQUENCE [LARGE SCALE GENOMIC DNA]</scope>
    <source>
        <strain>ATCC 27184 / PCC 6803 / Kazusa</strain>
    </source>
</reference>